<protein>
    <recommendedName>
        <fullName evidence="1">ATP-dependent Clp protease ATP-binding subunit ClpX</fullName>
    </recommendedName>
</protein>
<proteinExistence type="inferred from homology"/>
<sequence>MARIGDGGDLLKCSFCGKSQKQVKKLIAGPGVYICDECIDLCNEIIEEELADADDVKLDELPKPAEIREFLEGYVIGQDTAKRTLAVAVYNHYKRIQAGEKGRDSRCEPVELTKSNILMLGPTGCGKTYLAQTLAKMLNVPFAIADATALTEAGYVGEDVENILLKLIQAADYDVKRAETGIIYIDEVDKIARKSENPSITRDVSGEGVQQALLKILEGTQASVPPQGGRKHPHQEFIQIDTTNVLFIVAGAFAGLEKIIYERVGKRGLGFGAEVRSKAEIDTTDHFADVMPEDLIKFGLIPEFIGRLPVVASVTNLDKESLVKILSEPKNALVKQYIRLFEMDGVELEFTDDALEAIADQAIHRGTGARGLRAIMEEVLLPVMYDIPSRDDVAKVVVTKETVQDNVLPTIVPRKPSRSERRDKSA</sequence>
<evidence type="ECO:0000255" key="1">
    <source>
        <dbReference type="HAMAP-Rule" id="MF_00175"/>
    </source>
</evidence>
<evidence type="ECO:0000255" key="2">
    <source>
        <dbReference type="PROSITE-ProRule" id="PRU01250"/>
    </source>
</evidence>
<dbReference type="EMBL" id="LT708304">
    <property type="protein sequence ID" value="SIU01099.1"/>
    <property type="molecule type" value="Genomic_DNA"/>
</dbReference>
<dbReference type="RefSeq" id="NP_856131.1">
    <property type="nucleotide sequence ID" value="NC_002945.3"/>
</dbReference>
<dbReference type="RefSeq" id="WP_003412634.1">
    <property type="nucleotide sequence ID" value="NC_002945.4"/>
</dbReference>
<dbReference type="SMR" id="P0A529"/>
<dbReference type="GeneID" id="45426447"/>
<dbReference type="KEGG" id="mbo:BQ2027_MB2484C"/>
<dbReference type="PATRIC" id="fig|233413.5.peg.2735"/>
<dbReference type="Proteomes" id="UP000001419">
    <property type="component" value="Chromosome"/>
</dbReference>
<dbReference type="GO" id="GO:0009376">
    <property type="term" value="C:HslUV protease complex"/>
    <property type="evidence" value="ECO:0007669"/>
    <property type="project" value="TreeGrafter"/>
</dbReference>
<dbReference type="GO" id="GO:0005524">
    <property type="term" value="F:ATP binding"/>
    <property type="evidence" value="ECO:0007669"/>
    <property type="project" value="UniProtKB-UniRule"/>
</dbReference>
<dbReference type="GO" id="GO:0016887">
    <property type="term" value="F:ATP hydrolysis activity"/>
    <property type="evidence" value="ECO:0007669"/>
    <property type="project" value="InterPro"/>
</dbReference>
<dbReference type="GO" id="GO:0140662">
    <property type="term" value="F:ATP-dependent protein folding chaperone"/>
    <property type="evidence" value="ECO:0007669"/>
    <property type="project" value="InterPro"/>
</dbReference>
<dbReference type="GO" id="GO:0046983">
    <property type="term" value="F:protein dimerization activity"/>
    <property type="evidence" value="ECO:0007669"/>
    <property type="project" value="InterPro"/>
</dbReference>
<dbReference type="GO" id="GO:0051082">
    <property type="term" value="F:unfolded protein binding"/>
    <property type="evidence" value="ECO:0007669"/>
    <property type="project" value="UniProtKB-UniRule"/>
</dbReference>
<dbReference type="GO" id="GO:0008270">
    <property type="term" value="F:zinc ion binding"/>
    <property type="evidence" value="ECO:0007669"/>
    <property type="project" value="InterPro"/>
</dbReference>
<dbReference type="GO" id="GO:0051301">
    <property type="term" value="P:cell division"/>
    <property type="evidence" value="ECO:0007669"/>
    <property type="project" value="TreeGrafter"/>
</dbReference>
<dbReference type="GO" id="GO:0051603">
    <property type="term" value="P:proteolysis involved in protein catabolic process"/>
    <property type="evidence" value="ECO:0007669"/>
    <property type="project" value="TreeGrafter"/>
</dbReference>
<dbReference type="CDD" id="cd19497">
    <property type="entry name" value="RecA-like_ClpX"/>
    <property type="match status" value="1"/>
</dbReference>
<dbReference type="FunFam" id="1.10.8.60:FF:000002">
    <property type="entry name" value="ATP-dependent Clp protease ATP-binding subunit ClpX"/>
    <property type="match status" value="1"/>
</dbReference>
<dbReference type="FunFam" id="3.40.50.300:FF:000005">
    <property type="entry name" value="ATP-dependent Clp protease ATP-binding subunit ClpX"/>
    <property type="match status" value="1"/>
</dbReference>
<dbReference type="Gene3D" id="1.10.8.60">
    <property type="match status" value="1"/>
</dbReference>
<dbReference type="Gene3D" id="6.20.220.10">
    <property type="entry name" value="ClpX chaperone, C4-type zinc finger domain"/>
    <property type="match status" value="1"/>
</dbReference>
<dbReference type="Gene3D" id="3.40.50.300">
    <property type="entry name" value="P-loop containing nucleotide triphosphate hydrolases"/>
    <property type="match status" value="1"/>
</dbReference>
<dbReference type="HAMAP" id="MF_00175">
    <property type="entry name" value="ClpX"/>
    <property type="match status" value="1"/>
</dbReference>
<dbReference type="InterPro" id="IPR003593">
    <property type="entry name" value="AAA+_ATPase"/>
</dbReference>
<dbReference type="InterPro" id="IPR050052">
    <property type="entry name" value="ATP-dep_Clp_protease_ClpX"/>
</dbReference>
<dbReference type="InterPro" id="IPR003959">
    <property type="entry name" value="ATPase_AAA_core"/>
</dbReference>
<dbReference type="InterPro" id="IPR019489">
    <property type="entry name" value="Clp_ATPase_C"/>
</dbReference>
<dbReference type="InterPro" id="IPR004487">
    <property type="entry name" value="Clp_protease_ATP-bd_su_ClpX"/>
</dbReference>
<dbReference type="InterPro" id="IPR046425">
    <property type="entry name" value="ClpX_bact"/>
</dbReference>
<dbReference type="InterPro" id="IPR027417">
    <property type="entry name" value="P-loop_NTPase"/>
</dbReference>
<dbReference type="InterPro" id="IPR010603">
    <property type="entry name" value="Znf_CppX_C4"/>
</dbReference>
<dbReference type="InterPro" id="IPR038366">
    <property type="entry name" value="Znf_CppX_C4_sf"/>
</dbReference>
<dbReference type="NCBIfam" id="TIGR00382">
    <property type="entry name" value="clpX"/>
    <property type="match status" value="1"/>
</dbReference>
<dbReference type="NCBIfam" id="NF003745">
    <property type="entry name" value="PRK05342.1"/>
    <property type="match status" value="1"/>
</dbReference>
<dbReference type="PANTHER" id="PTHR48102:SF7">
    <property type="entry name" value="ATP-DEPENDENT CLP PROTEASE ATP-BINDING SUBUNIT CLPX-LIKE, MITOCHONDRIAL"/>
    <property type="match status" value="1"/>
</dbReference>
<dbReference type="PANTHER" id="PTHR48102">
    <property type="entry name" value="ATP-DEPENDENT CLP PROTEASE ATP-BINDING SUBUNIT CLPX-LIKE, MITOCHONDRIAL-RELATED"/>
    <property type="match status" value="1"/>
</dbReference>
<dbReference type="Pfam" id="PF07724">
    <property type="entry name" value="AAA_2"/>
    <property type="match status" value="1"/>
</dbReference>
<dbReference type="Pfam" id="PF10431">
    <property type="entry name" value="ClpB_D2-small"/>
    <property type="match status" value="1"/>
</dbReference>
<dbReference type="Pfam" id="PF06689">
    <property type="entry name" value="zf-C4_ClpX"/>
    <property type="match status" value="1"/>
</dbReference>
<dbReference type="SMART" id="SM00382">
    <property type="entry name" value="AAA"/>
    <property type="match status" value="1"/>
</dbReference>
<dbReference type="SMART" id="SM01086">
    <property type="entry name" value="ClpB_D2-small"/>
    <property type="match status" value="1"/>
</dbReference>
<dbReference type="SMART" id="SM00994">
    <property type="entry name" value="zf-C4_ClpX"/>
    <property type="match status" value="1"/>
</dbReference>
<dbReference type="SUPFAM" id="SSF57716">
    <property type="entry name" value="Glucocorticoid receptor-like (DNA-binding domain)"/>
    <property type="match status" value="1"/>
</dbReference>
<dbReference type="SUPFAM" id="SSF52540">
    <property type="entry name" value="P-loop containing nucleoside triphosphate hydrolases"/>
    <property type="match status" value="1"/>
</dbReference>
<dbReference type="PROSITE" id="PS51902">
    <property type="entry name" value="CLPX_ZB"/>
    <property type="match status" value="1"/>
</dbReference>
<feature type="chain" id="PRO_0000160385" description="ATP-dependent Clp protease ATP-binding subunit ClpX">
    <location>
        <begin position="1"/>
        <end position="426"/>
    </location>
</feature>
<feature type="domain" description="ClpX-type ZB" evidence="2">
    <location>
        <begin position="1"/>
        <end position="54"/>
    </location>
</feature>
<feature type="binding site" evidence="2">
    <location>
        <position position="13"/>
    </location>
    <ligand>
        <name>Zn(2+)</name>
        <dbReference type="ChEBI" id="CHEBI:29105"/>
    </ligand>
</feature>
<feature type="binding site" evidence="2">
    <location>
        <position position="16"/>
    </location>
    <ligand>
        <name>Zn(2+)</name>
        <dbReference type="ChEBI" id="CHEBI:29105"/>
    </ligand>
</feature>
<feature type="binding site" evidence="2">
    <location>
        <position position="35"/>
    </location>
    <ligand>
        <name>Zn(2+)</name>
        <dbReference type="ChEBI" id="CHEBI:29105"/>
    </ligand>
</feature>
<feature type="binding site" evidence="2">
    <location>
        <position position="38"/>
    </location>
    <ligand>
        <name>Zn(2+)</name>
        <dbReference type="ChEBI" id="CHEBI:29105"/>
    </ligand>
</feature>
<feature type="binding site" evidence="1">
    <location>
        <begin position="122"/>
        <end position="129"/>
    </location>
    <ligand>
        <name>ATP</name>
        <dbReference type="ChEBI" id="CHEBI:30616"/>
    </ligand>
</feature>
<keyword id="KW-0067">ATP-binding</keyword>
<keyword id="KW-0143">Chaperone</keyword>
<keyword id="KW-0479">Metal-binding</keyword>
<keyword id="KW-0547">Nucleotide-binding</keyword>
<keyword id="KW-1185">Reference proteome</keyword>
<keyword id="KW-0862">Zinc</keyword>
<accession>P0A529</accession>
<accession>A0A1R3Y198</accession>
<accession>O53184</accession>
<accession>X2BKU9</accession>
<name>CLPX_MYCBO</name>
<organism>
    <name type="scientific">Mycobacterium bovis (strain ATCC BAA-935 / AF2122/97)</name>
    <dbReference type="NCBI Taxonomy" id="233413"/>
    <lineage>
        <taxon>Bacteria</taxon>
        <taxon>Bacillati</taxon>
        <taxon>Actinomycetota</taxon>
        <taxon>Actinomycetes</taxon>
        <taxon>Mycobacteriales</taxon>
        <taxon>Mycobacteriaceae</taxon>
        <taxon>Mycobacterium</taxon>
        <taxon>Mycobacterium tuberculosis complex</taxon>
    </lineage>
</organism>
<reference key="1">
    <citation type="journal article" date="2003" name="Proc. Natl. Acad. Sci. U.S.A.">
        <title>The complete genome sequence of Mycobacterium bovis.</title>
        <authorList>
            <person name="Garnier T."/>
            <person name="Eiglmeier K."/>
            <person name="Camus J.-C."/>
            <person name="Medina N."/>
            <person name="Mansoor H."/>
            <person name="Pryor M."/>
            <person name="Duthoy S."/>
            <person name="Grondin S."/>
            <person name="Lacroix C."/>
            <person name="Monsempe C."/>
            <person name="Simon S."/>
            <person name="Harris B."/>
            <person name="Atkin R."/>
            <person name="Doggett J."/>
            <person name="Mayes R."/>
            <person name="Keating L."/>
            <person name="Wheeler P.R."/>
            <person name="Parkhill J."/>
            <person name="Barrell B.G."/>
            <person name="Cole S.T."/>
            <person name="Gordon S.V."/>
            <person name="Hewinson R.G."/>
        </authorList>
    </citation>
    <scope>NUCLEOTIDE SEQUENCE [LARGE SCALE GENOMIC DNA]</scope>
    <source>
        <strain>ATCC BAA-935 / AF2122/97</strain>
    </source>
</reference>
<reference key="2">
    <citation type="journal article" date="2017" name="Genome Announc.">
        <title>Updated reference genome sequence and annotation of Mycobacterium bovis AF2122/97.</title>
        <authorList>
            <person name="Malone K.M."/>
            <person name="Farrell D."/>
            <person name="Stuber T.P."/>
            <person name="Schubert O.T."/>
            <person name="Aebersold R."/>
            <person name="Robbe-Austerman S."/>
            <person name="Gordon S.V."/>
        </authorList>
    </citation>
    <scope>NUCLEOTIDE SEQUENCE [LARGE SCALE GENOMIC DNA]</scope>
    <scope>GENOME REANNOTATION</scope>
    <source>
        <strain>ATCC BAA-935 / AF2122/97</strain>
    </source>
</reference>
<gene>
    <name evidence="1" type="primary">clpX</name>
    <name type="ordered locus">BQ2027_MB2484C</name>
</gene>
<comment type="function">
    <text evidence="1">ATP-dependent specificity component of the Clp protease. It directs the protease to specific substrates. Can perform chaperone functions in the absence of ClpP.</text>
</comment>
<comment type="subunit">
    <text evidence="1">Component of the ClpX-ClpP complex. Forms a hexameric ring that, in the presence of ATP, binds to fourteen ClpP subunits assembled into a disk-like structure with a central cavity, resembling the structure of eukaryotic proteasomes.</text>
</comment>
<comment type="similarity">
    <text evidence="1">Belongs to the ClpX chaperone family.</text>
</comment>